<dbReference type="EC" id="5.3.1.16" evidence="1"/>
<dbReference type="EMBL" id="CP000546">
    <property type="protein sequence ID" value="ABN03200.1"/>
    <property type="molecule type" value="Genomic_DNA"/>
</dbReference>
<dbReference type="RefSeq" id="WP_004199906.1">
    <property type="nucleotide sequence ID" value="NC_008836.1"/>
</dbReference>
<dbReference type="SMR" id="A2S753"/>
<dbReference type="GeneID" id="93061751"/>
<dbReference type="KEGG" id="bml:BMA10229_A1793"/>
<dbReference type="HOGENOM" id="CLU_048577_1_1_4"/>
<dbReference type="UniPathway" id="UPA00031">
    <property type="reaction ID" value="UER00009"/>
</dbReference>
<dbReference type="Proteomes" id="UP000002283">
    <property type="component" value="Chromosome I"/>
</dbReference>
<dbReference type="GO" id="GO:0005737">
    <property type="term" value="C:cytoplasm"/>
    <property type="evidence" value="ECO:0007669"/>
    <property type="project" value="UniProtKB-SubCell"/>
</dbReference>
<dbReference type="GO" id="GO:0003949">
    <property type="term" value="F:1-(5-phosphoribosyl)-5-[(5-phosphoribosylamino)methylideneamino]imidazole-4-carboxamide isomerase activity"/>
    <property type="evidence" value="ECO:0007669"/>
    <property type="project" value="UniProtKB-UniRule"/>
</dbReference>
<dbReference type="GO" id="GO:0000105">
    <property type="term" value="P:L-histidine biosynthetic process"/>
    <property type="evidence" value="ECO:0007669"/>
    <property type="project" value="UniProtKB-UniRule"/>
</dbReference>
<dbReference type="GO" id="GO:0000162">
    <property type="term" value="P:L-tryptophan biosynthetic process"/>
    <property type="evidence" value="ECO:0007669"/>
    <property type="project" value="TreeGrafter"/>
</dbReference>
<dbReference type="CDD" id="cd04732">
    <property type="entry name" value="HisA"/>
    <property type="match status" value="1"/>
</dbReference>
<dbReference type="FunFam" id="3.20.20.70:FF:000009">
    <property type="entry name" value="1-(5-phosphoribosyl)-5-[(5-phosphoribosylamino)methylideneamino] imidazole-4-carboxamide isomerase"/>
    <property type="match status" value="1"/>
</dbReference>
<dbReference type="Gene3D" id="3.20.20.70">
    <property type="entry name" value="Aldolase class I"/>
    <property type="match status" value="1"/>
</dbReference>
<dbReference type="HAMAP" id="MF_01014">
    <property type="entry name" value="HisA"/>
    <property type="match status" value="1"/>
</dbReference>
<dbReference type="InterPro" id="IPR013785">
    <property type="entry name" value="Aldolase_TIM"/>
</dbReference>
<dbReference type="InterPro" id="IPR006062">
    <property type="entry name" value="His_biosynth"/>
</dbReference>
<dbReference type="InterPro" id="IPR006063">
    <property type="entry name" value="HisA_bact_arch"/>
</dbReference>
<dbReference type="InterPro" id="IPR044524">
    <property type="entry name" value="Isoase_HisA-like"/>
</dbReference>
<dbReference type="InterPro" id="IPR023016">
    <property type="entry name" value="Isoase_HisA-like_bact"/>
</dbReference>
<dbReference type="InterPro" id="IPR011060">
    <property type="entry name" value="RibuloseP-bd_barrel"/>
</dbReference>
<dbReference type="NCBIfam" id="TIGR00007">
    <property type="entry name" value="1-(5-phosphoribosyl)-5-[(5-phosphoribosylamino)methylideneamino]imidazole-4-carboxamide isomerase"/>
    <property type="match status" value="1"/>
</dbReference>
<dbReference type="NCBIfam" id="NF010112">
    <property type="entry name" value="PRK13585.1"/>
    <property type="match status" value="1"/>
</dbReference>
<dbReference type="PANTHER" id="PTHR43090">
    <property type="entry name" value="1-(5-PHOSPHORIBOSYL)-5-[(5-PHOSPHORIBOSYLAMINO)METHYLIDENEAMINO] IMIDAZOLE-4-CARBOXAMIDE ISOMERASE"/>
    <property type="match status" value="1"/>
</dbReference>
<dbReference type="PANTHER" id="PTHR43090:SF2">
    <property type="entry name" value="1-(5-PHOSPHORIBOSYL)-5-[(5-PHOSPHORIBOSYLAMINO)METHYLIDENEAMINO] IMIDAZOLE-4-CARBOXAMIDE ISOMERASE"/>
    <property type="match status" value="1"/>
</dbReference>
<dbReference type="Pfam" id="PF00977">
    <property type="entry name" value="His_biosynth"/>
    <property type="match status" value="1"/>
</dbReference>
<dbReference type="SUPFAM" id="SSF51366">
    <property type="entry name" value="Ribulose-phoshate binding barrel"/>
    <property type="match status" value="1"/>
</dbReference>
<name>HIS4_BURM9</name>
<feature type="chain" id="PRO_1000063191" description="1-(5-phosphoribosyl)-5-[(5-phosphoribosylamino)methylideneamino] imidazole-4-carboxamide isomerase">
    <location>
        <begin position="1"/>
        <end position="251"/>
    </location>
</feature>
<feature type="active site" description="Proton acceptor" evidence="1">
    <location>
        <position position="8"/>
    </location>
</feature>
<feature type="active site" description="Proton donor" evidence="1">
    <location>
        <position position="131"/>
    </location>
</feature>
<evidence type="ECO:0000255" key="1">
    <source>
        <dbReference type="HAMAP-Rule" id="MF_01014"/>
    </source>
</evidence>
<gene>
    <name evidence="1" type="primary">hisA</name>
    <name type="ordered locus">BMA10229_A1793</name>
</gene>
<accession>A2S753</accession>
<proteinExistence type="inferred from homology"/>
<protein>
    <recommendedName>
        <fullName evidence="1">1-(5-phosphoribosyl)-5-[(5-phosphoribosylamino)methylideneamino] imidazole-4-carboxamide isomerase</fullName>
        <ecNumber evidence="1">5.3.1.16</ecNumber>
    </recommendedName>
    <alternativeName>
        <fullName evidence="1">Phosphoribosylformimino-5-aminoimidazole carboxamide ribotide isomerase</fullName>
    </alternativeName>
</protein>
<reference key="1">
    <citation type="journal article" date="2010" name="Genome Biol. Evol.">
        <title>Continuing evolution of Burkholderia mallei through genome reduction and large-scale rearrangements.</title>
        <authorList>
            <person name="Losada L."/>
            <person name="Ronning C.M."/>
            <person name="DeShazer D."/>
            <person name="Woods D."/>
            <person name="Fedorova N."/>
            <person name="Kim H.S."/>
            <person name="Shabalina S.A."/>
            <person name="Pearson T.R."/>
            <person name="Brinkac L."/>
            <person name="Tan P."/>
            <person name="Nandi T."/>
            <person name="Crabtree J."/>
            <person name="Badger J."/>
            <person name="Beckstrom-Sternberg S."/>
            <person name="Saqib M."/>
            <person name="Schutzer S.E."/>
            <person name="Keim P."/>
            <person name="Nierman W.C."/>
        </authorList>
    </citation>
    <scope>NUCLEOTIDE SEQUENCE [LARGE SCALE GENOMIC DNA]</scope>
    <source>
        <strain>NCTC 10229</strain>
    </source>
</reference>
<comment type="catalytic activity">
    <reaction evidence="1">
        <text>1-(5-phospho-beta-D-ribosyl)-5-[(5-phospho-beta-D-ribosylamino)methylideneamino]imidazole-4-carboxamide = 5-[(5-phospho-1-deoxy-D-ribulos-1-ylimino)methylamino]-1-(5-phospho-beta-D-ribosyl)imidazole-4-carboxamide</text>
        <dbReference type="Rhea" id="RHEA:15469"/>
        <dbReference type="ChEBI" id="CHEBI:58435"/>
        <dbReference type="ChEBI" id="CHEBI:58525"/>
        <dbReference type="EC" id="5.3.1.16"/>
    </reaction>
</comment>
<comment type="pathway">
    <text evidence="1">Amino-acid biosynthesis; L-histidine biosynthesis; L-histidine from 5-phospho-alpha-D-ribose 1-diphosphate: step 4/9.</text>
</comment>
<comment type="subcellular location">
    <subcellularLocation>
        <location evidence="1">Cytoplasm</location>
    </subcellularLocation>
</comment>
<comment type="similarity">
    <text evidence="1">Belongs to the HisA/HisF family.</text>
</comment>
<sequence>MLLIPAIDLKDGQCVRLKQGDMDQATIFSEDPAAMARKWVDLGARRLHLVDLNGAFAGKPKNLEAIEAILGEVGDEIPVQLGGGIRSLETIEKYLDAGLSYVIIGTAAVKDPGFLQDACSAFAGNIIVGLDAKDGKVATDGWSKLTGHEVIDLARKFEDYGVESIVYTDIGRDGMLQGINIEATVKLAQAVGIPVIASGGLSNIVDIEKLCEVEDEGIEGVICGRAIYSGDLDFAAAQKRADELNGELDDA</sequence>
<organism>
    <name type="scientific">Burkholderia mallei (strain NCTC 10229)</name>
    <dbReference type="NCBI Taxonomy" id="412022"/>
    <lineage>
        <taxon>Bacteria</taxon>
        <taxon>Pseudomonadati</taxon>
        <taxon>Pseudomonadota</taxon>
        <taxon>Betaproteobacteria</taxon>
        <taxon>Burkholderiales</taxon>
        <taxon>Burkholderiaceae</taxon>
        <taxon>Burkholderia</taxon>
        <taxon>pseudomallei group</taxon>
    </lineage>
</organism>
<keyword id="KW-0028">Amino-acid biosynthesis</keyword>
<keyword id="KW-0963">Cytoplasm</keyword>
<keyword id="KW-0368">Histidine biosynthesis</keyword>
<keyword id="KW-0413">Isomerase</keyword>